<protein>
    <recommendedName>
        <fullName evidence="1">Large ribosomal subunit protein bL19</fullName>
    </recommendedName>
    <alternativeName>
        <fullName evidence="2">50S ribosomal protein L19</fullName>
    </alternativeName>
</protein>
<proteinExistence type="inferred from homology"/>
<organism>
    <name type="scientific">Brucella melitensis biotype 1 (strain ATCC 23456 / CCUG 17765 / NCTC 10094 / 16M)</name>
    <dbReference type="NCBI Taxonomy" id="224914"/>
    <lineage>
        <taxon>Bacteria</taxon>
        <taxon>Pseudomonadati</taxon>
        <taxon>Pseudomonadota</taxon>
        <taxon>Alphaproteobacteria</taxon>
        <taxon>Hyphomicrobiales</taxon>
        <taxon>Brucellaceae</taxon>
        <taxon>Brucella/Ochrobactrum group</taxon>
        <taxon>Brucella</taxon>
    </lineage>
</organism>
<feature type="chain" id="PRO_0000163424" description="Large ribosomal subunit protein bL19">
    <location>
        <begin position="1"/>
        <end position="145"/>
    </location>
</feature>
<name>RL19_BRUME</name>
<dbReference type="EMBL" id="AE008917">
    <property type="protein sequence ID" value="AAL51338.1"/>
    <property type="molecule type" value="Genomic_DNA"/>
</dbReference>
<dbReference type="PIR" id="AG3271">
    <property type="entry name" value="AG3271"/>
</dbReference>
<dbReference type="RefSeq" id="WP_002964975.1">
    <property type="nucleotide sequence ID" value="NZ_GG703778.1"/>
</dbReference>
<dbReference type="SMR" id="P66078"/>
<dbReference type="GeneID" id="97534805"/>
<dbReference type="KEGG" id="bme:BMEI0156"/>
<dbReference type="KEGG" id="bmel:DK63_1279"/>
<dbReference type="PATRIC" id="fig|224914.52.peg.1349"/>
<dbReference type="eggNOG" id="COG0335">
    <property type="taxonomic scope" value="Bacteria"/>
</dbReference>
<dbReference type="PhylomeDB" id="P66078"/>
<dbReference type="Proteomes" id="UP000000419">
    <property type="component" value="Chromosome I"/>
</dbReference>
<dbReference type="GO" id="GO:0022625">
    <property type="term" value="C:cytosolic large ribosomal subunit"/>
    <property type="evidence" value="ECO:0007669"/>
    <property type="project" value="TreeGrafter"/>
</dbReference>
<dbReference type="GO" id="GO:0003735">
    <property type="term" value="F:structural constituent of ribosome"/>
    <property type="evidence" value="ECO:0007669"/>
    <property type="project" value="InterPro"/>
</dbReference>
<dbReference type="GO" id="GO:0006412">
    <property type="term" value="P:translation"/>
    <property type="evidence" value="ECO:0007669"/>
    <property type="project" value="UniProtKB-UniRule"/>
</dbReference>
<dbReference type="FunFam" id="2.30.30.790:FF:000001">
    <property type="entry name" value="50S ribosomal protein L19"/>
    <property type="match status" value="1"/>
</dbReference>
<dbReference type="Gene3D" id="2.30.30.790">
    <property type="match status" value="1"/>
</dbReference>
<dbReference type="HAMAP" id="MF_00402">
    <property type="entry name" value="Ribosomal_bL19"/>
    <property type="match status" value="1"/>
</dbReference>
<dbReference type="InterPro" id="IPR001857">
    <property type="entry name" value="Ribosomal_bL19"/>
</dbReference>
<dbReference type="InterPro" id="IPR018257">
    <property type="entry name" value="Ribosomal_bL19_CS"/>
</dbReference>
<dbReference type="InterPro" id="IPR038657">
    <property type="entry name" value="Ribosomal_bL19_sf"/>
</dbReference>
<dbReference type="InterPro" id="IPR008991">
    <property type="entry name" value="Translation_prot_SH3-like_sf"/>
</dbReference>
<dbReference type="NCBIfam" id="TIGR01024">
    <property type="entry name" value="rplS_bact"/>
    <property type="match status" value="1"/>
</dbReference>
<dbReference type="PANTHER" id="PTHR15680:SF9">
    <property type="entry name" value="LARGE RIBOSOMAL SUBUNIT PROTEIN BL19M"/>
    <property type="match status" value="1"/>
</dbReference>
<dbReference type="PANTHER" id="PTHR15680">
    <property type="entry name" value="RIBOSOMAL PROTEIN L19"/>
    <property type="match status" value="1"/>
</dbReference>
<dbReference type="Pfam" id="PF01245">
    <property type="entry name" value="Ribosomal_L19"/>
    <property type="match status" value="1"/>
</dbReference>
<dbReference type="PIRSF" id="PIRSF002191">
    <property type="entry name" value="Ribosomal_L19"/>
    <property type="match status" value="1"/>
</dbReference>
<dbReference type="PRINTS" id="PR00061">
    <property type="entry name" value="RIBOSOMALL19"/>
</dbReference>
<dbReference type="SUPFAM" id="SSF50104">
    <property type="entry name" value="Translation proteins SH3-like domain"/>
    <property type="match status" value="1"/>
</dbReference>
<dbReference type="PROSITE" id="PS01015">
    <property type="entry name" value="RIBOSOMAL_L19"/>
    <property type="match status" value="1"/>
</dbReference>
<evidence type="ECO:0000255" key="1">
    <source>
        <dbReference type="HAMAP-Rule" id="MF_00402"/>
    </source>
</evidence>
<evidence type="ECO:0000305" key="2"/>
<gene>
    <name evidence="1" type="primary">rplS</name>
    <name type="ordered locus">BMEI0156</name>
</gene>
<reference key="1">
    <citation type="journal article" date="2002" name="Proc. Natl. Acad. Sci. U.S.A.">
        <title>The genome sequence of the facultative intracellular pathogen Brucella melitensis.</title>
        <authorList>
            <person name="DelVecchio V.G."/>
            <person name="Kapatral V."/>
            <person name="Redkar R.J."/>
            <person name="Patra G."/>
            <person name="Mujer C."/>
            <person name="Los T."/>
            <person name="Ivanova N."/>
            <person name="Anderson I."/>
            <person name="Bhattacharyya A."/>
            <person name="Lykidis A."/>
            <person name="Reznik G."/>
            <person name="Jablonski L."/>
            <person name="Larsen N."/>
            <person name="D'Souza M."/>
            <person name="Bernal A."/>
            <person name="Mazur M."/>
            <person name="Goltsman E."/>
            <person name="Selkov E."/>
            <person name="Elzer P.H."/>
            <person name="Hagius S."/>
            <person name="O'Callaghan D."/>
            <person name="Letesson J.-J."/>
            <person name="Haselkorn R."/>
            <person name="Kyrpides N.C."/>
            <person name="Overbeek R."/>
        </authorList>
    </citation>
    <scope>NUCLEOTIDE SEQUENCE [LARGE SCALE GENOMIC DNA]</scope>
    <source>
        <strain>ATCC 23456 / CCUG 17765 / NCTC 10094 / 16M</strain>
    </source>
</reference>
<keyword id="KW-0687">Ribonucleoprotein</keyword>
<keyword id="KW-0689">Ribosomal protein</keyword>
<accession>P66078</accession>
<accession>Q8YJD0</accession>
<comment type="function">
    <text evidence="1">This protein is located at the 30S-50S ribosomal subunit interface and may play a role in the structure and function of the aminoacyl-tRNA binding site.</text>
</comment>
<comment type="similarity">
    <text evidence="1">Belongs to the bacterial ribosomal protein bL19 family.</text>
</comment>
<sequence>MTDIIRQLEAEQAAKIEEKRKLPDFQPGDTVRVQVRVTEGTRTRVQAYEGVCIARSGAGLNENFTVRKISYGEGVERVFPVYSPIVEGVEVVRRGKVRRAKLYYLRGLTGKAARIAEKKDNRTKAERAADKLAAAKAEAAKTAAE</sequence>